<reference key="1">
    <citation type="submission" date="2009-07" db="EMBL/GenBank/DDBJ databases">
        <title>Complete sequence of Pectobacterium carotovorum subsp. carotovorum PC1.</title>
        <authorList>
            <consortium name="US DOE Joint Genome Institute"/>
            <person name="Lucas S."/>
            <person name="Copeland A."/>
            <person name="Lapidus A."/>
            <person name="Glavina del Rio T."/>
            <person name="Tice H."/>
            <person name="Bruce D."/>
            <person name="Goodwin L."/>
            <person name="Pitluck S."/>
            <person name="Munk A.C."/>
            <person name="Brettin T."/>
            <person name="Detter J.C."/>
            <person name="Han C."/>
            <person name="Tapia R."/>
            <person name="Larimer F."/>
            <person name="Land M."/>
            <person name="Hauser L."/>
            <person name="Kyrpides N."/>
            <person name="Mikhailova N."/>
            <person name="Balakrishnan V."/>
            <person name="Glasner J."/>
            <person name="Perna N.T."/>
        </authorList>
    </citation>
    <scope>NUCLEOTIDE SEQUENCE [LARGE SCALE GENOMIC DNA]</scope>
    <source>
        <strain>PC1</strain>
    </source>
</reference>
<organism>
    <name type="scientific">Pectobacterium carotovorum subsp. carotovorum (strain PC1)</name>
    <dbReference type="NCBI Taxonomy" id="561230"/>
    <lineage>
        <taxon>Bacteria</taxon>
        <taxon>Pseudomonadati</taxon>
        <taxon>Pseudomonadota</taxon>
        <taxon>Gammaproteobacteria</taxon>
        <taxon>Enterobacterales</taxon>
        <taxon>Pectobacteriaceae</taxon>
        <taxon>Pectobacterium</taxon>
    </lineage>
</organism>
<evidence type="ECO:0000255" key="1">
    <source>
        <dbReference type="HAMAP-Rule" id="MF_01176"/>
    </source>
</evidence>
<sequence length="164" mass="17955">MRLTSKGRYAVTAMLDVALHSQEGPVPLADISERQGISLSYLEQLFSRLRKNGLVASVRGPGGGYLLGKSANEIAVGMVISAVDESVDATRCQGREGCQGGDRCLTHTLWRDLSDRITDFLNNITLDELVNNKEVLDVADRQDADIRRTANGRIQETINVNLRA</sequence>
<protein>
    <recommendedName>
        <fullName evidence="1">HTH-type transcriptional regulator IscR</fullName>
    </recommendedName>
</protein>
<keyword id="KW-0001">2Fe-2S</keyword>
<keyword id="KW-0010">Activator</keyword>
<keyword id="KW-0238">DNA-binding</keyword>
<keyword id="KW-0408">Iron</keyword>
<keyword id="KW-0411">Iron-sulfur</keyword>
<keyword id="KW-0479">Metal-binding</keyword>
<keyword id="KW-0678">Repressor</keyword>
<keyword id="KW-0804">Transcription</keyword>
<keyword id="KW-0805">Transcription regulation</keyword>
<name>ISCR_PECCP</name>
<gene>
    <name evidence="1" type="primary">iscR</name>
    <name type="ordered locus">PC1_3032</name>
</gene>
<accession>C6DBJ2</accession>
<comment type="function">
    <text evidence="1">Regulates the transcription of several operons and genes involved in the biogenesis of Fe-S clusters and Fe-S-containing proteins.</text>
</comment>
<comment type="cofactor">
    <cofactor evidence="1">
        <name>[2Fe-2S] cluster</name>
        <dbReference type="ChEBI" id="CHEBI:190135"/>
    </cofactor>
    <text evidence="1">Binds 1 [2Fe-2S] cluster.</text>
</comment>
<proteinExistence type="inferred from homology"/>
<feature type="chain" id="PRO_1000213750" description="HTH-type transcriptional regulator IscR">
    <location>
        <begin position="1"/>
        <end position="164"/>
    </location>
</feature>
<feature type="domain" description="HTH rrf2-type" evidence="1">
    <location>
        <begin position="2"/>
        <end position="131"/>
    </location>
</feature>
<feature type="DNA-binding region" description="H-T-H motif" evidence="1">
    <location>
        <begin position="28"/>
        <end position="51"/>
    </location>
</feature>
<feature type="binding site" evidence="1">
    <location>
        <position position="92"/>
    </location>
    <ligand>
        <name>[2Fe-2S] cluster</name>
        <dbReference type="ChEBI" id="CHEBI:190135"/>
    </ligand>
</feature>
<feature type="binding site" evidence="1">
    <location>
        <position position="98"/>
    </location>
    <ligand>
        <name>[2Fe-2S] cluster</name>
        <dbReference type="ChEBI" id="CHEBI:190135"/>
    </ligand>
</feature>
<feature type="binding site" evidence="1">
    <location>
        <position position="104"/>
    </location>
    <ligand>
        <name>[2Fe-2S] cluster</name>
        <dbReference type="ChEBI" id="CHEBI:190135"/>
    </ligand>
</feature>
<dbReference type="EMBL" id="CP001657">
    <property type="protein sequence ID" value="ACT14055.1"/>
    <property type="molecule type" value="Genomic_DNA"/>
</dbReference>
<dbReference type="RefSeq" id="WP_015841206.1">
    <property type="nucleotide sequence ID" value="NC_012917.1"/>
</dbReference>
<dbReference type="SMR" id="C6DBJ2"/>
<dbReference type="STRING" id="561230.PC1_3032"/>
<dbReference type="GeneID" id="67793132"/>
<dbReference type="KEGG" id="pct:PC1_3032"/>
<dbReference type="eggNOG" id="COG1959">
    <property type="taxonomic scope" value="Bacteria"/>
</dbReference>
<dbReference type="HOGENOM" id="CLU_107144_0_0_6"/>
<dbReference type="OrthoDB" id="9808360at2"/>
<dbReference type="Proteomes" id="UP000002736">
    <property type="component" value="Chromosome"/>
</dbReference>
<dbReference type="GO" id="GO:0005829">
    <property type="term" value="C:cytosol"/>
    <property type="evidence" value="ECO:0007669"/>
    <property type="project" value="TreeGrafter"/>
</dbReference>
<dbReference type="GO" id="GO:0051537">
    <property type="term" value="F:2 iron, 2 sulfur cluster binding"/>
    <property type="evidence" value="ECO:0007669"/>
    <property type="project" value="UniProtKB-KW"/>
</dbReference>
<dbReference type="GO" id="GO:0003700">
    <property type="term" value="F:DNA-binding transcription factor activity"/>
    <property type="evidence" value="ECO:0007669"/>
    <property type="project" value="UniProtKB-UniRule"/>
</dbReference>
<dbReference type="GO" id="GO:0003690">
    <property type="term" value="F:double-stranded DNA binding"/>
    <property type="evidence" value="ECO:0007669"/>
    <property type="project" value="UniProtKB-UniRule"/>
</dbReference>
<dbReference type="GO" id="GO:0005506">
    <property type="term" value="F:iron ion binding"/>
    <property type="evidence" value="ECO:0007669"/>
    <property type="project" value="UniProtKB-UniRule"/>
</dbReference>
<dbReference type="FunFam" id="1.10.10.10:FF:000026">
    <property type="entry name" value="HTH-type transcriptional regulator IscR"/>
    <property type="match status" value="1"/>
</dbReference>
<dbReference type="Gene3D" id="1.10.10.10">
    <property type="entry name" value="Winged helix-like DNA-binding domain superfamily/Winged helix DNA-binding domain"/>
    <property type="match status" value="1"/>
</dbReference>
<dbReference type="HAMAP" id="MF_01176">
    <property type="entry name" value="HTH_type_IscR"/>
    <property type="match status" value="1"/>
</dbReference>
<dbReference type="InterPro" id="IPR010242">
    <property type="entry name" value="TF_HTH_IscR"/>
</dbReference>
<dbReference type="InterPro" id="IPR030489">
    <property type="entry name" value="TR_Rrf2-type_CS"/>
</dbReference>
<dbReference type="InterPro" id="IPR000944">
    <property type="entry name" value="Tscrpt_reg_Rrf2"/>
</dbReference>
<dbReference type="InterPro" id="IPR036388">
    <property type="entry name" value="WH-like_DNA-bd_sf"/>
</dbReference>
<dbReference type="InterPro" id="IPR036390">
    <property type="entry name" value="WH_DNA-bd_sf"/>
</dbReference>
<dbReference type="NCBIfam" id="TIGR02010">
    <property type="entry name" value="IscR"/>
    <property type="match status" value="1"/>
</dbReference>
<dbReference type="NCBIfam" id="NF008110">
    <property type="entry name" value="PRK10857.1"/>
    <property type="match status" value="1"/>
</dbReference>
<dbReference type="NCBIfam" id="TIGR00738">
    <property type="entry name" value="rrf2_super"/>
    <property type="match status" value="1"/>
</dbReference>
<dbReference type="PANTHER" id="PTHR33221:SF5">
    <property type="entry name" value="HTH-TYPE TRANSCRIPTIONAL REGULATOR ISCR"/>
    <property type="match status" value="1"/>
</dbReference>
<dbReference type="PANTHER" id="PTHR33221">
    <property type="entry name" value="WINGED HELIX-TURN-HELIX TRANSCRIPTIONAL REGULATOR, RRF2 FAMILY"/>
    <property type="match status" value="1"/>
</dbReference>
<dbReference type="Pfam" id="PF02082">
    <property type="entry name" value="Rrf2"/>
    <property type="match status" value="1"/>
</dbReference>
<dbReference type="SUPFAM" id="SSF46785">
    <property type="entry name" value="Winged helix' DNA-binding domain"/>
    <property type="match status" value="1"/>
</dbReference>
<dbReference type="PROSITE" id="PS01332">
    <property type="entry name" value="HTH_RRF2_1"/>
    <property type="match status" value="1"/>
</dbReference>
<dbReference type="PROSITE" id="PS51197">
    <property type="entry name" value="HTH_RRF2_2"/>
    <property type="match status" value="1"/>
</dbReference>